<sequence>MTDMNPDIEKDQTSDEVTVETTSVFRADFLSELDAPAQAGTESAVSGVEGLPPGSALLVVKRGPNAGSRFLLDQAITSAGRHPDSDIFLDDVTVSRRHAEFRLENNEFNVVDVGSLNGTYVNREPVDSAVLANGDEVQIGKFRLVFLTGPKQGEDDGSTGGP</sequence>
<protein>
    <recommendedName>
        <fullName>Glycogen accumulation regulator GarA</fullName>
    </recommendedName>
</protein>
<comment type="function">
    <text evidence="3 4 5">Involved in regulation of glutamate metabolism. Acts as a phosphorylation-dependent molecular switch that modulates the activities of Kgd, Gdh and GltB.</text>
</comment>
<comment type="activity regulation">
    <text evidence="4 5">Phosphorylation triggers an intra-molecular protein closure, which blocks the FHA binding site and interaction with target enzymes, and switches off the regulatory function of GarA.</text>
</comment>
<comment type="subunit">
    <text evidence="4">Monomer. Binds via its FHA domain to Kgd, Gdh, GltB, PknB, and the N-terminal region of PknG.</text>
</comment>
<comment type="interaction">
    <interactant intactId="EBI-6405522">
        <id>P9WJA9</id>
    </interactant>
    <interactant intactId="EBI-6405522">
        <id>P9WJA9</id>
        <label>garA</label>
    </interactant>
    <organismsDiffer>false</organismsDiffer>
    <experiments>3</experiments>
</comment>
<comment type="interaction">
    <interactant intactId="EBI-6405522">
        <id>P9WJA9</id>
    </interactant>
    <interactant intactId="EBI-6405569">
        <id>O53203</id>
        <label>gdh</label>
    </interactant>
    <organismsDiffer>false</organismsDiffer>
    <experiments>5</experiments>
</comment>
<comment type="interaction">
    <interactant intactId="EBI-6405522">
        <id>P9WJA9</id>
    </interactant>
    <interactant intactId="EBI-6405560">
        <id>P9WIS5</id>
        <label>kgd</label>
    </interactant>
    <organismsDiffer>false</organismsDiffer>
    <experiments>4</experiments>
</comment>
<comment type="interaction">
    <interactant intactId="EBI-6405522">
        <id>P9WJA9</id>
    </interactant>
    <interactant intactId="EBI-2946037">
        <id>P9WI81</id>
        <label>pknB</label>
    </interactant>
    <organismsDiffer>false</organismsDiffer>
    <experiments>2</experiments>
</comment>
<comment type="interaction">
    <interactant intactId="EBI-6405522">
        <id>P9WJA9</id>
    </interactant>
    <interactant intactId="EBI-6405537">
        <id>P9WI73</id>
        <label>pknG</label>
    </interactant>
    <organismsDiffer>false</organismsDiffer>
    <experiments>6</experiments>
</comment>
<comment type="PTM">
    <text evidence="2 3 6">Phosphorylated on Thr-22 by PknB. Phosphorylated on Thr-21 by PknG. Phosphorylation at either Thr-21 or Thr-22 prevents binding to target enzymes. Phosphorylation at these two threonines is mutually exclusive in vitro. Could also be phosphorylated by PknD, PknE and PknF.</text>
</comment>
<evidence type="ECO:0000255" key="1">
    <source>
        <dbReference type="PROSITE-ProRule" id="PRU00086"/>
    </source>
</evidence>
<evidence type="ECO:0000269" key="2">
    <source>
    </source>
</evidence>
<evidence type="ECO:0000269" key="3">
    <source>
    </source>
</evidence>
<evidence type="ECO:0000269" key="4">
    <source>
    </source>
</evidence>
<evidence type="ECO:0000269" key="5">
    <source>
    </source>
</evidence>
<evidence type="ECO:0000269" key="6">
    <source>
    </source>
</evidence>
<evidence type="ECO:0007744" key="7">
    <source>
    </source>
</evidence>
<evidence type="ECO:0007829" key="8">
    <source>
        <dbReference type="PDB" id="2KFU"/>
    </source>
</evidence>
<evidence type="ECO:0007829" key="9">
    <source>
        <dbReference type="PDB" id="6I2P"/>
    </source>
</evidence>
<evidence type="ECO:0007829" key="10">
    <source>
        <dbReference type="PDB" id="7RJ3"/>
    </source>
</evidence>
<accession>P9WJA9</accession>
<accession>I3V6A5</accession>
<accession>P64897</accession>
<accession>Q50606</accession>
<reference key="1">
    <citation type="submission" date="2012-04" db="EMBL/GenBank/DDBJ databases">
        <title>Complete Rv1827 gene sequence of Mycobactarium tuberculosis strain AIIMS/LM/SS/TB-2016 I/05 SP.</title>
        <authorList>
            <person name="Singh A."/>
            <person name="Singh S."/>
        </authorList>
    </citation>
    <scope>NUCLEOTIDE SEQUENCE [GENOMIC DNA]</scope>
    <source>
        <strain>AIIMS/LM/SS/TB-2016 I/05 SP</strain>
    </source>
</reference>
<reference key="2">
    <citation type="journal article" date="1998" name="Nature">
        <title>Deciphering the biology of Mycobacterium tuberculosis from the complete genome sequence.</title>
        <authorList>
            <person name="Cole S.T."/>
            <person name="Brosch R."/>
            <person name="Parkhill J."/>
            <person name="Garnier T."/>
            <person name="Churcher C.M."/>
            <person name="Harris D.E."/>
            <person name="Gordon S.V."/>
            <person name="Eiglmeier K."/>
            <person name="Gas S."/>
            <person name="Barry C.E. III"/>
            <person name="Tekaia F."/>
            <person name="Badcock K."/>
            <person name="Basham D."/>
            <person name="Brown D."/>
            <person name="Chillingworth T."/>
            <person name="Connor R."/>
            <person name="Davies R.M."/>
            <person name="Devlin K."/>
            <person name="Feltwell T."/>
            <person name="Gentles S."/>
            <person name="Hamlin N."/>
            <person name="Holroyd S."/>
            <person name="Hornsby T."/>
            <person name="Jagels K."/>
            <person name="Krogh A."/>
            <person name="McLean J."/>
            <person name="Moule S."/>
            <person name="Murphy L.D."/>
            <person name="Oliver S."/>
            <person name="Osborne J."/>
            <person name="Quail M.A."/>
            <person name="Rajandream M.A."/>
            <person name="Rogers J."/>
            <person name="Rutter S."/>
            <person name="Seeger K."/>
            <person name="Skelton S."/>
            <person name="Squares S."/>
            <person name="Squares R."/>
            <person name="Sulston J.E."/>
            <person name="Taylor K."/>
            <person name="Whitehead S."/>
            <person name="Barrell B.G."/>
        </authorList>
    </citation>
    <scope>NUCLEOTIDE SEQUENCE [LARGE SCALE GENOMIC DNA]</scope>
    <source>
        <strain>ATCC 25618 / H37Rv</strain>
    </source>
</reference>
<reference key="3">
    <citation type="journal article" date="2005" name="J. Mol. Biol.">
        <title>Proteomic identification of M. tuberculosis protein kinase substrates: PknB recruits GarA, a FHA domain-containing protein, through activation loop-mediated interactions.</title>
        <authorList>
            <person name="Villarino A."/>
            <person name="Duran R."/>
            <person name="Wehenkel A."/>
            <person name="Fernandez P."/>
            <person name="England P."/>
            <person name="Brodin P."/>
            <person name="Cole S.T."/>
            <person name="Zimny-Arndt U."/>
            <person name="Jungblut P.R."/>
            <person name="Cervenansky C."/>
            <person name="Alzari P.M."/>
        </authorList>
    </citation>
    <scope>PROTEIN SEQUENCE OF 20-28</scope>
    <scope>INTERACTION WITH PKNB</scope>
    <scope>PHOSPHORYLATION AT THR-22</scope>
    <scope>IDENTIFICATION BY MASS SPECTROMETRY</scope>
    <source>
        <strain>ATCC 25618 / H37Rv</strain>
    </source>
</reference>
<reference key="4">
    <citation type="journal article" date="2008" name="Mol. Microbiol.">
        <title>Regulation of glutamate metabolism by protein kinases in mycobacteria.</title>
        <authorList>
            <person name="O'Hare H.M."/>
            <person name="Duran R."/>
            <person name="Cervenansky C."/>
            <person name="Bellinzoni M."/>
            <person name="Wehenkel A.M."/>
            <person name="Pritsch O."/>
            <person name="Obal G."/>
            <person name="Baumgartner J."/>
            <person name="Vialaret J."/>
            <person name="Johnsson K."/>
            <person name="Alzari P.M."/>
        </authorList>
    </citation>
    <scope>FUNCTION</scope>
    <scope>INTERACTION WITH KGD; GDH AND PKNG</scope>
    <scope>PHOSPHORYLATION AT THR-21</scope>
    <scope>MUTAGENESIS OF THR-21 AND THR-22</scope>
    <source>
        <strain>ATCC 25618 / H37Rv</strain>
    </source>
</reference>
<reference key="5">
    <citation type="journal article" date="2009" name="FEBS Lett.">
        <title>The FHA-containing protein GarA acts as a phosphorylation-dependent molecular switch in mycobacterial signaling.</title>
        <authorList>
            <person name="England P."/>
            <person name="Wehenkel A."/>
            <person name="Martins S."/>
            <person name="Hoos S."/>
            <person name="Andre-Leroux G."/>
            <person name="Villarino A."/>
            <person name="Alzari P.M."/>
        </authorList>
    </citation>
    <scope>FUNCTION</scope>
    <scope>ACTIVITY REGULATION</scope>
    <scope>SUBUNIT</scope>
</reference>
<reference key="6">
    <citation type="journal article" date="2009" name="J. Biol. Chem.">
        <title>Key residues in Mycobacterium tuberculosis protein kinase G play a role in regulating kinase activity and survival in the host.</title>
        <authorList>
            <person name="Tiwari D."/>
            <person name="Singh R.K."/>
            <person name="Goswami K."/>
            <person name="Verma S.K."/>
            <person name="Prakash B."/>
            <person name="Nandicoori V.K."/>
        </authorList>
    </citation>
    <scope>PHOSPHORYLATION BY PKNG</scope>
    <source>
        <strain>ATCC 25618 / H37Rv</strain>
    </source>
</reference>
<reference key="7">
    <citation type="journal article" date="2011" name="Mol. Cell. Proteomics">
        <title>Proteogenomic analysis of Mycobacterium tuberculosis by high resolution mass spectrometry.</title>
        <authorList>
            <person name="Kelkar D.S."/>
            <person name="Kumar D."/>
            <person name="Kumar P."/>
            <person name="Balakrishnan L."/>
            <person name="Muthusamy B."/>
            <person name="Yadav A.K."/>
            <person name="Shrivastava P."/>
            <person name="Marimuthu A."/>
            <person name="Anand S."/>
            <person name="Sundaram H."/>
            <person name="Kingsbury R."/>
            <person name="Harsha H.C."/>
            <person name="Nair B."/>
            <person name="Prasad T.S."/>
            <person name="Chauhan D.S."/>
            <person name="Katoch K."/>
            <person name="Katoch V.M."/>
            <person name="Kumar P."/>
            <person name="Chaerkady R."/>
            <person name="Ramachandran S."/>
            <person name="Dash D."/>
            <person name="Pandey A."/>
        </authorList>
    </citation>
    <scope>ACETYLATION [LARGE SCALE ANALYSIS] AT THR-2</scope>
    <scope>CLEAVAGE OF INITIATOR METHIONINE [LARGE SCALE ANALYSIS]</scope>
    <scope>IDENTIFICATION BY MASS SPECTROMETRY [LARGE SCALE ANALYSIS]</scope>
    <source>
        <strain>ATCC 25618 / H37Rv</strain>
    </source>
</reference>
<reference key="8">
    <citation type="journal article" date="2009" name="Sci. Signal.">
        <title>An intramolecular switch regulates phosphoindependent FHA domain interactions in Mycobacterium tuberculosis.</title>
        <authorList>
            <person name="Nott T.J."/>
            <person name="Kelly G."/>
            <person name="Stach L."/>
            <person name="Li J."/>
            <person name="Westcott S."/>
            <person name="Patel D."/>
            <person name="Hunt D.M."/>
            <person name="Howell S."/>
            <person name="Buxton R.S."/>
            <person name="O'Hare H.M."/>
            <person name="Smerdon S.J."/>
        </authorList>
    </citation>
    <scope>STRUCTURE BY NMR OF 2-162</scope>
    <scope>FUNCTION</scope>
    <scope>ACTIVITY REGULATION</scope>
    <scope>INTERACTION WITH KGD; GDH AND GLTB</scope>
    <scope>MUTAGENESIS OF SER-95</scope>
    <source>
        <strain>ATCC 25618 / H37Rv</strain>
    </source>
</reference>
<keyword id="KW-0002">3D-structure</keyword>
<keyword id="KW-0007">Acetylation</keyword>
<keyword id="KW-0903">Direct protein sequencing</keyword>
<keyword id="KW-0597">Phosphoprotein</keyword>
<keyword id="KW-1185">Reference proteome</keyword>
<dbReference type="EMBL" id="JQ885576">
    <property type="protein sequence ID" value="AFK73561.1"/>
    <property type="molecule type" value="Genomic_DNA"/>
</dbReference>
<dbReference type="EMBL" id="AL123456">
    <property type="protein sequence ID" value="CCP44593.1"/>
    <property type="molecule type" value="Genomic_DNA"/>
</dbReference>
<dbReference type="PIR" id="D70721">
    <property type="entry name" value="D70721"/>
</dbReference>
<dbReference type="RefSeq" id="NP_216343.1">
    <property type="nucleotide sequence ID" value="NC_000962.3"/>
</dbReference>
<dbReference type="RefSeq" id="WP_003899041.1">
    <property type="nucleotide sequence ID" value="NZ_NVQJ01000013.1"/>
</dbReference>
<dbReference type="PDB" id="2KFU">
    <property type="method" value="NMR"/>
    <property type="chains" value="A=2-162"/>
</dbReference>
<dbReference type="PDB" id="6I2P">
    <property type="method" value="X-ray"/>
    <property type="resolution" value="2.37 A"/>
    <property type="chains" value="D/E=1-162"/>
</dbReference>
<dbReference type="PDB" id="7RJ3">
    <property type="method" value="X-ray"/>
    <property type="resolution" value="1.68 A"/>
    <property type="chains" value="A/B/C=4-162"/>
</dbReference>
<dbReference type="PDBsum" id="2KFU"/>
<dbReference type="PDBsum" id="6I2P"/>
<dbReference type="PDBsum" id="7RJ3"/>
<dbReference type="BMRB" id="P9WJA9"/>
<dbReference type="SMR" id="P9WJA9"/>
<dbReference type="ELM" id="P9WJA9"/>
<dbReference type="FunCoup" id="P9WJA9">
    <property type="interactions" value="4"/>
</dbReference>
<dbReference type="IntAct" id="P9WJA9">
    <property type="interactions" value="6"/>
</dbReference>
<dbReference type="MINT" id="P9WJA9"/>
<dbReference type="STRING" id="83332.Rv1827"/>
<dbReference type="TCDB" id="9.B.321.1.1">
    <property type="family name" value="the actinobacterial nutrient-sensing signal transduction pathway controlling glutamate metabolism (sigt) family"/>
</dbReference>
<dbReference type="iPTMnet" id="P9WJA9"/>
<dbReference type="PaxDb" id="83332-Rv1827"/>
<dbReference type="DNASU" id="885735"/>
<dbReference type="GeneID" id="45425801"/>
<dbReference type="GeneID" id="885735"/>
<dbReference type="KEGG" id="mtu:Rv1827"/>
<dbReference type="KEGG" id="mtv:RVBD_1827"/>
<dbReference type="TubercuList" id="Rv1827"/>
<dbReference type="eggNOG" id="COG1716">
    <property type="taxonomic scope" value="Bacteria"/>
</dbReference>
<dbReference type="InParanoid" id="P9WJA9"/>
<dbReference type="OrthoDB" id="9815925at2"/>
<dbReference type="PhylomeDB" id="P9WJA9"/>
<dbReference type="SABIO-RK" id="P9WJA9"/>
<dbReference type="EvolutionaryTrace" id="P9WJA9"/>
<dbReference type="Proteomes" id="UP000001584">
    <property type="component" value="Chromosome"/>
</dbReference>
<dbReference type="GO" id="GO:0005576">
    <property type="term" value="C:extracellular region"/>
    <property type="evidence" value="ECO:0007005"/>
    <property type="project" value="MTBBASE"/>
</dbReference>
<dbReference type="GO" id="GO:0009274">
    <property type="term" value="C:peptidoglycan-based cell wall"/>
    <property type="evidence" value="ECO:0007005"/>
    <property type="project" value="MTBBASE"/>
</dbReference>
<dbReference type="GO" id="GO:0005886">
    <property type="term" value="C:plasma membrane"/>
    <property type="evidence" value="ECO:0007005"/>
    <property type="project" value="MTBBASE"/>
</dbReference>
<dbReference type="GO" id="GO:0042802">
    <property type="term" value="F:identical protein binding"/>
    <property type="evidence" value="ECO:0000353"/>
    <property type="project" value="IntAct"/>
</dbReference>
<dbReference type="GO" id="GO:0140678">
    <property type="term" value="F:molecular function inhibitor activity"/>
    <property type="evidence" value="ECO:0000314"/>
    <property type="project" value="UniProtKB"/>
</dbReference>
<dbReference type="GO" id="GO:0003729">
    <property type="term" value="F:mRNA binding"/>
    <property type="evidence" value="ECO:0000318"/>
    <property type="project" value="GO_Central"/>
</dbReference>
<dbReference type="GO" id="GO:0045820">
    <property type="term" value="P:negative regulation of glycolytic process"/>
    <property type="evidence" value="ECO:0000314"/>
    <property type="project" value="MTBBASE"/>
</dbReference>
<dbReference type="GO" id="GO:0043457">
    <property type="term" value="P:regulation of cellular respiration"/>
    <property type="evidence" value="ECO:0000314"/>
    <property type="project" value="MTBBASE"/>
</dbReference>
<dbReference type="CDD" id="cd22720">
    <property type="entry name" value="FHA_GarA-like"/>
    <property type="match status" value="1"/>
</dbReference>
<dbReference type="DisProt" id="DP01589"/>
<dbReference type="FunFam" id="2.60.200.20:FF:000027">
    <property type="entry name" value="Peptide-binding protein"/>
    <property type="match status" value="1"/>
</dbReference>
<dbReference type="Gene3D" id="2.60.200.20">
    <property type="match status" value="1"/>
</dbReference>
<dbReference type="InterPro" id="IPR050923">
    <property type="entry name" value="Cell_Proc_Reg/RNA_Proc"/>
</dbReference>
<dbReference type="InterPro" id="IPR000253">
    <property type="entry name" value="FHA_dom"/>
</dbReference>
<dbReference type="InterPro" id="IPR008984">
    <property type="entry name" value="SMAD_FHA_dom_sf"/>
</dbReference>
<dbReference type="PANTHER" id="PTHR23308">
    <property type="entry name" value="NUCLEAR INHIBITOR OF PROTEIN PHOSPHATASE-1"/>
    <property type="match status" value="1"/>
</dbReference>
<dbReference type="Pfam" id="PF00498">
    <property type="entry name" value="FHA"/>
    <property type="match status" value="1"/>
</dbReference>
<dbReference type="SMART" id="SM00240">
    <property type="entry name" value="FHA"/>
    <property type="match status" value="1"/>
</dbReference>
<dbReference type="SUPFAM" id="SSF49879">
    <property type="entry name" value="SMAD/FHA domain"/>
    <property type="match status" value="1"/>
</dbReference>
<dbReference type="PROSITE" id="PS50006">
    <property type="entry name" value="FHA_DOMAIN"/>
    <property type="match status" value="1"/>
</dbReference>
<name>GARA_MYCTU</name>
<organism>
    <name type="scientific">Mycobacterium tuberculosis (strain ATCC 25618 / H37Rv)</name>
    <dbReference type="NCBI Taxonomy" id="83332"/>
    <lineage>
        <taxon>Bacteria</taxon>
        <taxon>Bacillati</taxon>
        <taxon>Actinomycetota</taxon>
        <taxon>Actinomycetes</taxon>
        <taxon>Mycobacteriales</taxon>
        <taxon>Mycobacteriaceae</taxon>
        <taxon>Mycobacterium</taxon>
        <taxon>Mycobacterium tuberculosis complex</taxon>
    </lineage>
</organism>
<gene>
    <name type="primary">garA</name>
    <name type="ordered locus">Rv1827</name>
    <name type="ORF">MTCY1A11.16c</name>
</gene>
<feature type="initiator methionine" description="Removed" evidence="7">
    <location>
        <position position="1"/>
    </location>
</feature>
<feature type="chain" id="PRO_0000103902" description="Glycogen accumulation regulator GarA">
    <location>
        <begin position="2"/>
        <end position="162"/>
    </location>
</feature>
<feature type="domain" description="FHA" evidence="1">
    <location>
        <begin position="77"/>
        <end position="126"/>
    </location>
</feature>
<feature type="modified residue" description="N-acetylthreonine" evidence="7">
    <location>
        <position position="2"/>
    </location>
</feature>
<feature type="modified residue" description="Phosphothreonine; by PknG" evidence="3">
    <location>
        <position position="21"/>
    </location>
</feature>
<feature type="modified residue" description="Phosphothreonine; by PknB" evidence="2">
    <location>
        <position position="22"/>
    </location>
</feature>
<feature type="mutagenesis site" description="Lack of phosphorylation by PknG." evidence="3">
    <original>T</original>
    <variation>A</variation>
    <location>
        <position position="21"/>
    </location>
</feature>
<feature type="mutagenesis site" description="Does not affect phosphorylation by PknG." evidence="3">
    <original>T</original>
    <variation>A</variation>
    <location>
        <position position="22"/>
    </location>
</feature>
<feature type="mutagenesis site" description="Decreases ability to bind to and regulate the activities of Gdh and GltB, but does not affect ability to inhibit Kgd." evidence="5">
    <original>S</original>
    <variation>A</variation>
    <location>
        <position position="95"/>
    </location>
</feature>
<feature type="strand" evidence="8">
    <location>
        <begin position="12"/>
        <end position="14"/>
    </location>
</feature>
<feature type="turn" evidence="8">
    <location>
        <begin position="27"/>
        <end position="30"/>
    </location>
</feature>
<feature type="helix" evidence="9">
    <location>
        <begin position="31"/>
        <end position="33"/>
    </location>
</feature>
<feature type="strand" evidence="8">
    <location>
        <begin position="47"/>
        <end position="50"/>
    </location>
</feature>
<feature type="strand" evidence="10">
    <location>
        <begin position="56"/>
        <end position="63"/>
    </location>
</feature>
<feature type="turn" evidence="10">
    <location>
        <begin position="64"/>
        <end position="67"/>
    </location>
</feature>
<feature type="strand" evidence="10">
    <location>
        <begin position="69"/>
        <end position="72"/>
    </location>
</feature>
<feature type="strand" evidence="10">
    <location>
        <begin position="74"/>
        <end position="82"/>
    </location>
</feature>
<feature type="strand" evidence="10">
    <location>
        <begin position="86"/>
        <end position="88"/>
    </location>
</feature>
<feature type="turn" evidence="8">
    <location>
        <begin position="90"/>
        <end position="92"/>
    </location>
</feature>
<feature type="strand" evidence="8">
    <location>
        <begin position="93"/>
        <end position="96"/>
    </location>
</feature>
<feature type="strand" evidence="10">
    <location>
        <begin position="99"/>
        <end position="104"/>
    </location>
</feature>
<feature type="strand" evidence="10">
    <location>
        <begin position="107"/>
        <end position="112"/>
    </location>
</feature>
<feature type="strand" evidence="10">
    <location>
        <begin position="119"/>
        <end position="121"/>
    </location>
</feature>
<feature type="strand" evidence="10">
    <location>
        <begin position="124"/>
        <end position="130"/>
    </location>
</feature>
<feature type="strand" evidence="10">
    <location>
        <begin position="136"/>
        <end position="139"/>
    </location>
</feature>
<feature type="strand" evidence="10">
    <location>
        <begin position="142"/>
        <end position="148"/>
    </location>
</feature>
<proteinExistence type="evidence at protein level"/>